<accession>A9M3Q7</accession>
<proteinExistence type="inferred from homology"/>
<comment type="function">
    <text evidence="1">Catalyzes the interconversion between ADP-D-glycero-beta-D-manno-heptose and ADP-L-glycero-beta-D-manno-heptose via an epimerization at carbon 6 of the heptose.</text>
</comment>
<comment type="catalytic activity">
    <reaction evidence="1">
        <text>ADP-D-glycero-beta-D-manno-heptose = ADP-L-glycero-beta-D-manno-heptose</text>
        <dbReference type="Rhea" id="RHEA:17577"/>
        <dbReference type="ChEBI" id="CHEBI:59967"/>
        <dbReference type="ChEBI" id="CHEBI:61506"/>
        <dbReference type="EC" id="5.1.3.20"/>
    </reaction>
</comment>
<comment type="cofactor">
    <cofactor evidence="1">
        <name>NADP(+)</name>
        <dbReference type="ChEBI" id="CHEBI:58349"/>
    </cofactor>
    <text evidence="1">Binds 1 NADP(+) per subunit.</text>
</comment>
<comment type="pathway">
    <text evidence="1">Nucleotide-sugar biosynthesis; ADP-L-glycero-beta-D-manno-heptose biosynthesis; ADP-L-glycero-beta-D-manno-heptose from D-glycero-beta-D-manno-heptose 7-phosphate: step 4/4.</text>
</comment>
<comment type="subunit">
    <text evidence="1">Homopentamer.</text>
</comment>
<comment type="domain">
    <text evidence="1">Contains a large N-terminal NADP-binding domain, and a smaller C-terminal substrate-binding domain.</text>
</comment>
<comment type="similarity">
    <text evidence="1">Belongs to the NAD(P)-dependent epimerase/dehydratase family. HldD subfamily.</text>
</comment>
<feature type="chain" id="PRO_1000088012" description="ADP-L-glycero-D-manno-heptose-6-epimerase">
    <location>
        <begin position="1"/>
        <end position="334"/>
    </location>
</feature>
<feature type="active site" description="Proton acceptor" evidence="1">
    <location>
        <position position="141"/>
    </location>
</feature>
<feature type="active site" description="Proton acceptor" evidence="1">
    <location>
        <position position="180"/>
    </location>
</feature>
<feature type="binding site" evidence="1">
    <location>
        <begin position="11"/>
        <end position="12"/>
    </location>
    <ligand>
        <name>NADP(+)</name>
        <dbReference type="ChEBI" id="CHEBI:58349"/>
    </ligand>
</feature>
<feature type="binding site" evidence="1">
    <location>
        <begin position="32"/>
        <end position="33"/>
    </location>
    <ligand>
        <name>NADP(+)</name>
        <dbReference type="ChEBI" id="CHEBI:58349"/>
    </ligand>
</feature>
<feature type="binding site" evidence="1">
    <location>
        <position position="39"/>
    </location>
    <ligand>
        <name>NADP(+)</name>
        <dbReference type="ChEBI" id="CHEBI:58349"/>
    </ligand>
</feature>
<feature type="binding site" evidence="1">
    <location>
        <position position="54"/>
    </location>
    <ligand>
        <name>NADP(+)</name>
        <dbReference type="ChEBI" id="CHEBI:58349"/>
    </ligand>
</feature>
<feature type="binding site" evidence="1">
    <location>
        <begin position="77"/>
        <end position="81"/>
    </location>
    <ligand>
        <name>NADP(+)</name>
        <dbReference type="ChEBI" id="CHEBI:58349"/>
    </ligand>
</feature>
<feature type="binding site" evidence="1">
    <location>
        <position position="94"/>
    </location>
    <ligand>
        <name>NADP(+)</name>
        <dbReference type="ChEBI" id="CHEBI:58349"/>
    </ligand>
</feature>
<feature type="binding site" evidence="1">
    <location>
        <position position="145"/>
    </location>
    <ligand>
        <name>NADP(+)</name>
        <dbReference type="ChEBI" id="CHEBI:58349"/>
    </ligand>
</feature>
<feature type="binding site" evidence="1">
    <location>
        <position position="171"/>
    </location>
    <ligand>
        <name>substrate</name>
    </ligand>
</feature>
<feature type="binding site" evidence="1">
    <location>
        <position position="172"/>
    </location>
    <ligand>
        <name>NADP(+)</name>
        <dbReference type="ChEBI" id="CHEBI:58349"/>
    </ligand>
</feature>
<feature type="binding site" evidence="1">
    <location>
        <position position="180"/>
    </location>
    <ligand>
        <name>NADP(+)</name>
        <dbReference type="ChEBI" id="CHEBI:58349"/>
    </ligand>
</feature>
<feature type="binding site" evidence="1">
    <location>
        <position position="182"/>
    </location>
    <ligand>
        <name>substrate</name>
    </ligand>
</feature>
<feature type="binding site" evidence="1">
    <location>
        <position position="189"/>
    </location>
    <ligand>
        <name>substrate</name>
    </ligand>
</feature>
<feature type="binding site" evidence="1">
    <location>
        <begin position="203"/>
        <end position="206"/>
    </location>
    <ligand>
        <name>substrate</name>
    </ligand>
</feature>
<feature type="binding site" evidence="1">
    <location>
        <position position="216"/>
    </location>
    <ligand>
        <name>substrate</name>
    </ligand>
</feature>
<feature type="binding site" evidence="1">
    <location>
        <position position="295"/>
    </location>
    <ligand>
        <name>substrate</name>
    </ligand>
</feature>
<sequence>MTIIVTGAAGFIGSNIVKALNQRGITDIVAVDNLSKGEKFKNLAECEIAHYLDKHEFIRQVREHILPYQNIEAVFHQGACSDTMNHDGLYMMDNNYQYTLDLLDWCQDERIPFLYASSAAVYGKGEIFREERELEKPLNVYGYSKFLFDQVLRRRMKEGLTAQVVGFRYFNVYGQHEQHKGRMASVAFHHFHQYREHGYVNLFGSNDGYGNGEQTRDFVSVEDVAKVNLYFFDHPELSGIYNLGTGRSQQFNELAAATVNACRAAEGKPEMSLKELVEEELIRYIPFPDALKGKYQSFTQADITKLREAGYTEEFFDVKSGVERYVKWMLENLA</sequence>
<gene>
    <name evidence="1" type="primary">hldD</name>
    <name type="ordered locus">NMCC_0789</name>
</gene>
<dbReference type="EC" id="5.1.3.20" evidence="1"/>
<dbReference type="EMBL" id="CP000381">
    <property type="protein sequence ID" value="ABX72982.1"/>
    <property type="molecule type" value="Genomic_DNA"/>
</dbReference>
<dbReference type="RefSeq" id="WP_012221493.1">
    <property type="nucleotide sequence ID" value="NC_010120.1"/>
</dbReference>
<dbReference type="SMR" id="A9M3Q7"/>
<dbReference type="KEGG" id="nmn:NMCC_0789"/>
<dbReference type="HOGENOM" id="CLU_007383_1_3_4"/>
<dbReference type="UniPathway" id="UPA00356">
    <property type="reaction ID" value="UER00440"/>
</dbReference>
<dbReference type="Proteomes" id="UP000001177">
    <property type="component" value="Chromosome"/>
</dbReference>
<dbReference type="GO" id="GO:0008712">
    <property type="term" value="F:ADP-glyceromanno-heptose 6-epimerase activity"/>
    <property type="evidence" value="ECO:0007669"/>
    <property type="project" value="UniProtKB-UniRule"/>
</dbReference>
<dbReference type="GO" id="GO:0050661">
    <property type="term" value="F:NADP binding"/>
    <property type="evidence" value="ECO:0007669"/>
    <property type="project" value="InterPro"/>
</dbReference>
<dbReference type="GO" id="GO:0097171">
    <property type="term" value="P:ADP-L-glycero-beta-D-manno-heptose biosynthetic process"/>
    <property type="evidence" value="ECO:0007669"/>
    <property type="project" value="UniProtKB-UniPathway"/>
</dbReference>
<dbReference type="GO" id="GO:0005975">
    <property type="term" value="P:carbohydrate metabolic process"/>
    <property type="evidence" value="ECO:0007669"/>
    <property type="project" value="UniProtKB-UniRule"/>
</dbReference>
<dbReference type="CDD" id="cd05248">
    <property type="entry name" value="ADP_GME_SDR_e"/>
    <property type="match status" value="1"/>
</dbReference>
<dbReference type="Gene3D" id="3.40.50.720">
    <property type="entry name" value="NAD(P)-binding Rossmann-like Domain"/>
    <property type="match status" value="1"/>
</dbReference>
<dbReference type="Gene3D" id="3.90.25.10">
    <property type="entry name" value="UDP-galactose 4-epimerase, domain 1"/>
    <property type="match status" value="1"/>
</dbReference>
<dbReference type="HAMAP" id="MF_01601">
    <property type="entry name" value="Heptose_epimerase"/>
    <property type="match status" value="1"/>
</dbReference>
<dbReference type="InterPro" id="IPR001509">
    <property type="entry name" value="Epimerase_deHydtase"/>
</dbReference>
<dbReference type="InterPro" id="IPR011912">
    <property type="entry name" value="Heptose_epim"/>
</dbReference>
<dbReference type="InterPro" id="IPR036291">
    <property type="entry name" value="NAD(P)-bd_dom_sf"/>
</dbReference>
<dbReference type="NCBIfam" id="TIGR02197">
    <property type="entry name" value="heptose_epim"/>
    <property type="match status" value="1"/>
</dbReference>
<dbReference type="PANTHER" id="PTHR43103:SF3">
    <property type="entry name" value="ADP-L-GLYCERO-D-MANNO-HEPTOSE-6-EPIMERASE"/>
    <property type="match status" value="1"/>
</dbReference>
<dbReference type="PANTHER" id="PTHR43103">
    <property type="entry name" value="NUCLEOSIDE-DIPHOSPHATE-SUGAR EPIMERASE"/>
    <property type="match status" value="1"/>
</dbReference>
<dbReference type="Pfam" id="PF01370">
    <property type="entry name" value="Epimerase"/>
    <property type="match status" value="1"/>
</dbReference>
<dbReference type="SUPFAM" id="SSF51735">
    <property type="entry name" value="NAD(P)-binding Rossmann-fold domains"/>
    <property type="match status" value="1"/>
</dbReference>
<organism>
    <name type="scientific">Neisseria meningitidis serogroup C (strain 053442)</name>
    <dbReference type="NCBI Taxonomy" id="374833"/>
    <lineage>
        <taxon>Bacteria</taxon>
        <taxon>Pseudomonadati</taxon>
        <taxon>Pseudomonadota</taxon>
        <taxon>Betaproteobacteria</taxon>
        <taxon>Neisseriales</taxon>
        <taxon>Neisseriaceae</taxon>
        <taxon>Neisseria</taxon>
    </lineage>
</organism>
<name>HLDD_NEIM0</name>
<keyword id="KW-0119">Carbohydrate metabolism</keyword>
<keyword id="KW-0413">Isomerase</keyword>
<keyword id="KW-0521">NADP</keyword>
<evidence type="ECO:0000255" key="1">
    <source>
        <dbReference type="HAMAP-Rule" id="MF_01601"/>
    </source>
</evidence>
<reference key="1">
    <citation type="journal article" date="2008" name="Genomics">
        <title>Characterization of ST-4821 complex, a unique Neisseria meningitidis clone.</title>
        <authorList>
            <person name="Peng J."/>
            <person name="Yang L."/>
            <person name="Yang F."/>
            <person name="Yang J."/>
            <person name="Yan Y."/>
            <person name="Nie H."/>
            <person name="Zhang X."/>
            <person name="Xiong Z."/>
            <person name="Jiang Y."/>
            <person name="Cheng F."/>
            <person name="Xu X."/>
            <person name="Chen S."/>
            <person name="Sun L."/>
            <person name="Li W."/>
            <person name="Shen Y."/>
            <person name="Shao Z."/>
            <person name="Liang X."/>
            <person name="Xu J."/>
            <person name="Jin Q."/>
        </authorList>
    </citation>
    <scope>NUCLEOTIDE SEQUENCE [LARGE SCALE GENOMIC DNA]</scope>
    <source>
        <strain>053442</strain>
    </source>
</reference>
<protein>
    <recommendedName>
        <fullName evidence="1">ADP-L-glycero-D-manno-heptose-6-epimerase</fullName>
        <ecNumber evidence="1">5.1.3.20</ecNumber>
    </recommendedName>
    <alternativeName>
        <fullName evidence="1">ADP-L-glycero-beta-D-manno-heptose-6-epimerase</fullName>
        <shortName evidence="1">ADP-glyceromanno-heptose 6-epimerase</shortName>
        <shortName evidence="1">ADP-hep 6-epimerase</shortName>
        <shortName evidence="1">AGME</shortName>
    </alternativeName>
</protein>